<keyword id="KW-0249">Electron transport</keyword>
<keyword id="KW-0408">Iron</keyword>
<keyword id="KW-0479">Metal-binding</keyword>
<keyword id="KW-0813">Transport</keyword>
<proteinExistence type="inferred from homology"/>
<protein>
    <recommendedName>
        <fullName>Rubredoxin-2</fullName>
    </recommendedName>
</protein>
<dbReference type="EMBL" id="AJ009586">
    <property type="protein sequence ID" value="CAC37043.1"/>
    <property type="molecule type" value="Genomic_DNA"/>
</dbReference>
<dbReference type="RefSeq" id="WP_007734094.1">
    <property type="nucleotide sequence ID" value="NZ_WIDN01000121.1"/>
</dbReference>
<dbReference type="SMR" id="Q9AE63"/>
<dbReference type="STRING" id="1833.XU06_03880"/>
<dbReference type="OMA" id="TAWEDIP"/>
<dbReference type="OrthoDB" id="9800607at2"/>
<dbReference type="GO" id="GO:0009055">
    <property type="term" value="F:electron transfer activity"/>
    <property type="evidence" value="ECO:0007669"/>
    <property type="project" value="TreeGrafter"/>
</dbReference>
<dbReference type="GO" id="GO:0005506">
    <property type="term" value="F:iron ion binding"/>
    <property type="evidence" value="ECO:0007669"/>
    <property type="project" value="InterPro"/>
</dbReference>
<dbReference type="GO" id="GO:0043448">
    <property type="term" value="P:alkane catabolic process"/>
    <property type="evidence" value="ECO:0007669"/>
    <property type="project" value="TreeGrafter"/>
</dbReference>
<dbReference type="CDD" id="cd00730">
    <property type="entry name" value="rubredoxin"/>
    <property type="match status" value="1"/>
</dbReference>
<dbReference type="FunFam" id="2.20.28.10:FF:000001">
    <property type="entry name" value="Rubredoxin"/>
    <property type="match status" value="1"/>
</dbReference>
<dbReference type="Gene3D" id="2.20.28.10">
    <property type="match status" value="1"/>
</dbReference>
<dbReference type="InterPro" id="IPR024934">
    <property type="entry name" value="Rubredoxin-like_dom"/>
</dbReference>
<dbReference type="InterPro" id="IPR024935">
    <property type="entry name" value="Rubredoxin_dom"/>
</dbReference>
<dbReference type="InterPro" id="IPR050526">
    <property type="entry name" value="Rubredoxin_ET"/>
</dbReference>
<dbReference type="InterPro" id="IPR018527">
    <property type="entry name" value="Rubredoxin_Fe_BS"/>
</dbReference>
<dbReference type="PANTHER" id="PTHR47627">
    <property type="entry name" value="RUBREDOXIN"/>
    <property type="match status" value="1"/>
</dbReference>
<dbReference type="PANTHER" id="PTHR47627:SF1">
    <property type="entry name" value="RUBREDOXIN-1-RELATED"/>
    <property type="match status" value="1"/>
</dbReference>
<dbReference type="Pfam" id="PF00301">
    <property type="entry name" value="Rubredoxin"/>
    <property type="match status" value="1"/>
</dbReference>
<dbReference type="PRINTS" id="PR00163">
    <property type="entry name" value="RUBREDOXIN"/>
</dbReference>
<dbReference type="SUPFAM" id="SSF57802">
    <property type="entry name" value="Rubredoxin-like"/>
    <property type="match status" value="1"/>
</dbReference>
<dbReference type="PROSITE" id="PS00202">
    <property type="entry name" value="RUBREDOXIN"/>
    <property type="match status" value="1"/>
</dbReference>
<dbReference type="PROSITE" id="PS50903">
    <property type="entry name" value="RUBREDOXIN_LIKE"/>
    <property type="match status" value="1"/>
</dbReference>
<gene>
    <name type="primary">rubA2</name>
</gene>
<reference key="1">
    <citation type="journal article" date="2002" name="Environ. Microbiol.">
        <title>Alkane hydroxylase homologues in Gram-positive strains.</title>
        <authorList>
            <person name="van Beilen J.B."/>
            <person name="Smits T.H.M."/>
            <person name="Whyte L.G."/>
            <person name="Schorcht S."/>
            <person name="Rothlisberger M."/>
            <person name="Plaggemeier T."/>
            <person name="Engesser K.H."/>
            <person name="Witholt B."/>
        </authorList>
    </citation>
    <scope>NUCLEOTIDE SEQUENCE [GENOMIC DNA]</scope>
    <source>
        <strain>ATCC 15960 / IAM 1474 / JCM 2893 / NRRL B-16531</strain>
    </source>
</reference>
<feature type="chain" id="PRO_0000135045" description="Rubredoxin-2">
    <location>
        <begin position="1"/>
        <end position="63"/>
    </location>
</feature>
<feature type="domain" description="Rubredoxin-like" evidence="2">
    <location>
        <begin position="8"/>
        <end position="59"/>
    </location>
</feature>
<feature type="binding site" evidence="2">
    <location>
        <position position="13"/>
    </location>
    <ligand>
        <name>Fe cation</name>
        <dbReference type="ChEBI" id="CHEBI:24875"/>
    </ligand>
</feature>
<feature type="binding site" evidence="2">
    <location>
        <position position="16"/>
    </location>
    <ligand>
        <name>Fe cation</name>
        <dbReference type="ChEBI" id="CHEBI:24875"/>
    </ligand>
</feature>
<feature type="binding site" evidence="2">
    <location>
        <position position="46"/>
    </location>
    <ligand>
        <name>Fe cation</name>
        <dbReference type="ChEBI" id="CHEBI:24875"/>
    </ligand>
</feature>
<feature type="binding site" evidence="2">
    <location>
        <position position="49"/>
    </location>
    <ligand>
        <name>Fe cation</name>
        <dbReference type="ChEBI" id="CHEBI:24875"/>
    </ligand>
</feature>
<accession>Q9AE63</accession>
<name>RUBR2_RHOER</name>
<sequence>MSETATAYKLFRCLQCGFEYDEAIGWPDDGIEPGTRWDEIPEDWSCPDCGAAKVDFEMVEVDR</sequence>
<comment type="function">
    <text>Involved in the hydrocarbon hydroxylating system, which transfers electrons from NADH to rubredoxin reductase and then through rubredoxin to alkane 1 monooxygenase.</text>
</comment>
<comment type="cofactor">
    <cofactor evidence="1">
        <name>Fe(3+)</name>
        <dbReference type="ChEBI" id="CHEBI:29034"/>
    </cofactor>
    <text evidence="1">Binds 1 Fe(3+) ion per subunit.</text>
</comment>
<comment type="similarity">
    <text evidence="3">Belongs to the rubredoxin family.</text>
</comment>
<evidence type="ECO:0000250" key="1"/>
<evidence type="ECO:0000255" key="2">
    <source>
        <dbReference type="PROSITE-ProRule" id="PRU00241"/>
    </source>
</evidence>
<evidence type="ECO:0000305" key="3"/>
<organism>
    <name type="scientific">Rhodococcus erythropolis</name>
    <name type="common">Arthrobacter picolinophilus</name>
    <dbReference type="NCBI Taxonomy" id="1833"/>
    <lineage>
        <taxon>Bacteria</taxon>
        <taxon>Bacillati</taxon>
        <taxon>Actinomycetota</taxon>
        <taxon>Actinomycetes</taxon>
        <taxon>Mycobacteriales</taxon>
        <taxon>Nocardiaceae</taxon>
        <taxon>Rhodococcus</taxon>
        <taxon>Rhodococcus erythropolis group</taxon>
    </lineage>
</organism>